<name>GATB_STRPF</name>
<comment type="function">
    <text evidence="1">Allows the formation of correctly charged Asn-tRNA(Asn) or Gln-tRNA(Gln) through the transamidation of misacylated Asp-tRNA(Asn) or Glu-tRNA(Gln) in organisms which lack either or both of asparaginyl-tRNA or glutaminyl-tRNA synthetases. The reaction takes place in the presence of glutamine and ATP through an activated phospho-Asp-tRNA(Asn) or phospho-Glu-tRNA(Gln).</text>
</comment>
<comment type="catalytic activity">
    <reaction evidence="1">
        <text>L-glutamyl-tRNA(Gln) + L-glutamine + ATP + H2O = L-glutaminyl-tRNA(Gln) + L-glutamate + ADP + phosphate + H(+)</text>
        <dbReference type="Rhea" id="RHEA:17521"/>
        <dbReference type="Rhea" id="RHEA-COMP:9681"/>
        <dbReference type="Rhea" id="RHEA-COMP:9684"/>
        <dbReference type="ChEBI" id="CHEBI:15377"/>
        <dbReference type="ChEBI" id="CHEBI:15378"/>
        <dbReference type="ChEBI" id="CHEBI:29985"/>
        <dbReference type="ChEBI" id="CHEBI:30616"/>
        <dbReference type="ChEBI" id="CHEBI:43474"/>
        <dbReference type="ChEBI" id="CHEBI:58359"/>
        <dbReference type="ChEBI" id="CHEBI:78520"/>
        <dbReference type="ChEBI" id="CHEBI:78521"/>
        <dbReference type="ChEBI" id="CHEBI:456216"/>
    </reaction>
</comment>
<comment type="catalytic activity">
    <reaction evidence="1">
        <text>L-aspartyl-tRNA(Asn) + L-glutamine + ATP + H2O = L-asparaginyl-tRNA(Asn) + L-glutamate + ADP + phosphate + 2 H(+)</text>
        <dbReference type="Rhea" id="RHEA:14513"/>
        <dbReference type="Rhea" id="RHEA-COMP:9674"/>
        <dbReference type="Rhea" id="RHEA-COMP:9677"/>
        <dbReference type="ChEBI" id="CHEBI:15377"/>
        <dbReference type="ChEBI" id="CHEBI:15378"/>
        <dbReference type="ChEBI" id="CHEBI:29985"/>
        <dbReference type="ChEBI" id="CHEBI:30616"/>
        <dbReference type="ChEBI" id="CHEBI:43474"/>
        <dbReference type="ChEBI" id="CHEBI:58359"/>
        <dbReference type="ChEBI" id="CHEBI:78515"/>
        <dbReference type="ChEBI" id="CHEBI:78516"/>
        <dbReference type="ChEBI" id="CHEBI:456216"/>
    </reaction>
</comment>
<comment type="subunit">
    <text evidence="1">Heterotrimer of A, B and C subunits.</text>
</comment>
<comment type="similarity">
    <text evidence="1">Belongs to the GatB/GatE family. GatB subfamily.</text>
</comment>
<proteinExistence type="inferred from homology"/>
<keyword id="KW-0067">ATP-binding</keyword>
<keyword id="KW-0436">Ligase</keyword>
<keyword id="KW-0547">Nucleotide-binding</keyword>
<keyword id="KW-0648">Protein biosynthesis</keyword>
<dbReference type="EC" id="6.3.5.-" evidence="1"/>
<dbReference type="EMBL" id="CP000262">
    <property type="protein sequence ID" value="ABF38516.1"/>
    <property type="molecule type" value="Genomic_DNA"/>
</dbReference>
<dbReference type="SMR" id="Q1J570"/>
<dbReference type="KEGG" id="spi:MGAS10750_Spy1566"/>
<dbReference type="HOGENOM" id="CLU_019240_0_0_9"/>
<dbReference type="Proteomes" id="UP000002434">
    <property type="component" value="Chromosome"/>
</dbReference>
<dbReference type="GO" id="GO:0050566">
    <property type="term" value="F:asparaginyl-tRNA synthase (glutamine-hydrolyzing) activity"/>
    <property type="evidence" value="ECO:0007669"/>
    <property type="project" value="RHEA"/>
</dbReference>
<dbReference type="GO" id="GO:0005524">
    <property type="term" value="F:ATP binding"/>
    <property type="evidence" value="ECO:0007669"/>
    <property type="project" value="UniProtKB-KW"/>
</dbReference>
<dbReference type="GO" id="GO:0050567">
    <property type="term" value="F:glutaminyl-tRNA synthase (glutamine-hydrolyzing) activity"/>
    <property type="evidence" value="ECO:0007669"/>
    <property type="project" value="UniProtKB-UniRule"/>
</dbReference>
<dbReference type="GO" id="GO:0070681">
    <property type="term" value="P:glutaminyl-tRNAGln biosynthesis via transamidation"/>
    <property type="evidence" value="ECO:0007669"/>
    <property type="project" value="TreeGrafter"/>
</dbReference>
<dbReference type="GO" id="GO:0006412">
    <property type="term" value="P:translation"/>
    <property type="evidence" value="ECO:0007669"/>
    <property type="project" value="UniProtKB-UniRule"/>
</dbReference>
<dbReference type="FunFam" id="1.10.10.410:FF:000001">
    <property type="entry name" value="Aspartyl/glutamyl-tRNA(Asn/Gln) amidotransferase subunit B"/>
    <property type="match status" value="1"/>
</dbReference>
<dbReference type="FunFam" id="1.10.150.380:FF:000001">
    <property type="entry name" value="Aspartyl/glutamyl-tRNA(Asn/Gln) amidotransferase subunit B"/>
    <property type="match status" value="1"/>
</dbReference>
<dbReference type="Gene3D" id="1.10.10.410">
    <property type="match status" value="1"/>
</dbReference>
<dbReference type="Gene3D" id="1.10.150.380">
    <property type="entry name" value="GatB domain, N-terminal subdomain"/>
    <property type="match status" value="1"/>
</dbReference>
<dbReference type="HAMAP" id="MF_00121">
    <property type="entry name" value="GatB"/>
    <property type="match status" value="1"/>
</dbReference>
<dbReference type="InterPro" id="IPR017959">
    <property type="entry name" value="Asn/Gln-tRNA_amidoTrfase_suB/E"/>
</dbReference>
<dbReference type="InterPro" id="IPR006075">
    <property type="entry name" value="Asn/Gln-tRNA_Trfase_suB/E_cat"/>
</dbReference>
<dbReference type="InterPro" id="IPR018027">
    <property type="entry name" value="Asn/Gln_amidotransferase"/>
</dbReference>
<dbReference type="InterPro" id="IPR003789">
    <property type="entry name" value="Asn/Gln_tRNA_amidoTrase-B-like"/>
</dbReference>
<dbReference type="InterPro" id="IPR004413">
    <property type="entry name" value="GatB"/>
</dbReference>
<dbReference type="InterPro" id="IPR042114">
    <property type="entry name" value="GatB_C_1"/>
</dbReference>
<dbReference type="InterPro" id="IPR023168">
    <property type="entry name" value="GatB_Yqey_C_2"/>
</dbReference>
<dbReference type="InterPro" id="IPR017958">
    <property type="entry name" value="Gln-tRNA_amidoTrfase_suB_CS"/>
</dbReference>
<dbReference type="InterPro" id="IPR014746">
    <property type="entry name" value="Gln_synth/guanido_kin_cat_dom"/>
</dbReference>
<dbReference type="NCBIfam" id="TIGR00133">
    <property type="entry name" value="gatB"/>
    <property type="match status" value="1"/>
</dbReference>
<dbReference type="NCBIfam" id="NF004011">
    <property type="entry name" value="PRK05477.1-1"/>
    <property type="match status" value="1"/>
</dbReference>
<dbReference type="NCBIfam" id="NF004012">
    <property type="entry name" value="PRK05477.1-2"/>
    <property type="match status" value="1"/>
</dbReference>
<dbReference type="NCBIfam" id="NF004014">
    <property type="entry name" value="PRK05477.1-4"/>
    <property type="match status" value="1"/>
</dbReference>
<dbReference type="PANTHER" id="PTHR11659">
    <property type="entry name" value="GLUTAMYL-TRNA GLN AMIDOTRANSFERASE SUBUNIT B MITOCHONDRIAL AND PROKARYOTIC PET112-RELATED"/>
    <property type="match status" value="1"/>
</dbReference>
<dbReference type="PANTHER" id="PTHR11659:SF0">
    <property type="entry name" value="GLUTAMYL-TRNA(GLN) AMIDOTRANSFERASE SUBUNIT B, MITOCHONDRIAL"/>
    <property type="match status" value="1"/>
</dbReference>
<dbReference type="Pfam" id="PF02934">
    <property type="entry name" value="GatB_N"/>
    <property type="match status" value="1"/>
</dbReference>
<dbReference type="Pfam" id="PF02637">
    <property type="entry name" value="GatB_Yqey"/>
    <property type="match status" value="1"/>
</dbReference>
<dbReference type="SMART" id="SM00845">
    <property type="entry name" value="GatB_Yqey"/>
    <property type="match status" value="1"/>
</dbReference>
<dbReference type="SUPFAM" id="SSF89095">
    <property type="entry name" value="GatB/YqeY motif"/>
    <property type="match status" value="1"/>
</dbReference>
<dbReference type="SUPFAM" id="SSF55931">
    <property type="entry name" value="Glutamine synthetase/guanido kinase"/>
    <property type="match status" value="1"/>
</dbReference>
<dbReference type="PROSITE" id="PS01234">
    <property type="entry name" value="GATB"/>
    <property type="match status" value="1"/>
</dbReference>
<feature type="chain" id="PRO_1000016047" description="Aspartyl/glutamyl-tRNA(Asn/Gln) amidotransferase subunit B">
    <location>
        <begin position="1"/>
        <end position="479"/>
    </location>
</feature>
<organism>
    <name type="scientific">Streptococcus pyogenes serotype M4 (strain MGAS10750)</name>
    <dbReference type="NCBI Taxonomy" id="370554"/>
    <lineage>
        <taxon>Bacteria</taxon>
        <taxon>Bacillati</taxon>
        <taxon>Bacillota</taxon>
        <taxon>Bacilli</taxon>
        <taxon>Lactobacillales</taxon>
        <taxon>Streptococcaceae</taxon>
        <taxon>Streptococcus</taxon>
    </lineage>
</organism>
<gene>
    <name evidence="1" type="primary">gatB</name>
    <name type="ordered locus">MGAS10750_Spy1566</name>
</gene>
<reference key="1">
    <citation type="journal article" date="2006" name="Proc. Natl. Acad. Sci. U.S.A.">
        <title>Molecular genetic anatomy of inter- and intraserotype variation in the human bacterial pathogen group A Streptococcus.</title>
        <authorList>
            <person name="Beres S.B."/>
            <person name="Richter E.W."/>
            <person name="Nagiec M.J."/>
            <person name="Sumby P."/>
            <person name="Porcella S.F."/>
            <person name="DeLeo F.R."/>
            <person name="Musser J.M."/>
        </authorList>
    </citation>
    <scope>NUCLEOTIDE SEQUENCE [LARGE SCALE GENOMIC DNA]</scope>
    <source>
        <strain>MGAS10750</strain>
    </source>
</reference>
<protein>
    <recommendedName>
        <fullName evidence="1">Aspartyl/glutamyl-tRNA(Asn/Gln) amidotransferase subunit B</fullName>
        <shortName evidence="1">Asp/Glu-ADT subunit B</shortName>
        <ecNumber evidence="1">6.3.5.-</ecNumber>
    </recommendedName>
</protein>
<accession>Q1J570</accession>
<sequence length="479" mass="53472">MNFETIIGLEVHVELNTNSKIFSPSSAHFGEDPNANTNVIDWSFPGVLPVMNKGVIDAGIQAALALNMDIHKEMHFDRKNYFYPDNPKAYQISQFDEPIGYNGWIDIKLEDGSTKKIRIERAHLEEDAGKNTHGTDGYSYVDLNRQGVPLIEIVSEADMRSPEEAYAYLTALKEIIQYTGISDVKMEEGSMRVDANISLRPYGQEQFGTKTELKNLNSFSNVRKGLEFEVERQAKLLRSGGVIRQETRRYDEANKGTILMRVKEGAADYRYFPEPDLPLYEIDDAWIDEMRAQLPQFPAQRRAKYEEELGLSAYDASQLTATKALSDFFETAVSLGGDAKQVSNWLQGEVAQFLNAEGKTIEEIRLTPDNLVEMIAIIADGTISSKMAKKVFVHLAKNGGSARAYVEKAGLVQISDPAVLVPIIHQVFADNEAAVADFKSGKRNADKAFTGFLMKATKGQANPQVAQQLLAQELQKLRD</sequence>
<evidence type="ECO:0000255" key="1">
    <source>
        <dbReference type="HAMAP-Rule" id="MF_00121"/>
    </source>
</evidence>